<comment type="function">
    <text evidence="3 4">Involved in the detoxification of the Fusarium mycotoxin deoxynivalenol by the transfer of glucose from UDP-D-glucose to the hydroxyl group at C-3, forming deoxynivalenol-3-O-beta-D-glucoside.</text>
</comment>
<comment type="biophysicochemical properties">
    <kinetics>
        <KM evidence="3">230 uM for deoxynivalenol</KM>
        <KM evidence="4">61 uM for deoxynivalenol</KM>
        <KM evidence="4">22 uM for HT-2 mycotoxin</KM>
        <KM evidence="4">35 uM for nivalenol</KM>
        <KM evidence="3">2.2 mM for UDP-D-glucose</KM>
        <Vmax evidence="3">0.36 umol/min/mg enzyme with deoxynivalenol as substrate</Vmax>
    </kinetics>
</comment>
<comment type="induction">
    <text evidence="2">Induced by exposition to gamma ray.</text>
</comment>
<comment type="similarity">
    <text evidence="7">Belongs to the UDP-glycosyltransferase family.</text>
</comment>
<keyword id="KW-0002">3D-structure</keyword>
<keyword id="KW-0216">Detoxification</keyword>
<keyword id="KW-0328">Glycosyltransferase</keyword>
<keyword id="KW-0547">Nucleotide-binding</keyword>
<keyword id="KW-1185">Reference proteome</keyword>
<keyword id="KW-0808">Transferase</keyword>
<gene>
    <name evidence="5" type="primary">UGT79</name>
    <name evidence="6" type="synonym">OS79</name>
    <name evidence="9" type="ordered locus">Os04g0206600</name>
    <name evidence="7" type="ordered locus">LOC_Os04g12970</name>
    <name evidence="11" type="ORF">OsJ_13826</name>
    <name evidence="10" type="ORF">OSJNBa0052O21.15</name>
</gene>
<accession>Q7XT97</accession>
<accession>A3AR29</accession>
<protein>
    <recommendedName>
        <fullName evidence="7">UDP-glycosyltransferase 79</fullName>
        <shortName evidence="5">OsUGT79</shortName>
        <ecNumber evidence="3">2.4.1.-</ecNumber>
    </recommendedName>
    <alternativeName>
        <fullName evidence="6">Deoxynivalenol-UDP-glucosyltransferase</fullName>
    </alternativeName>
</protein>
<evidence type="ECO:0000250" key="1">
    <source>
        <dbReference type="UniProtKB" id="A0A0A1HA03"/>
    </source>
</evidence>
<evidence type="ECO:0000269" key="2">
    <source>
    </source>
</evidence>
<evidence type="ECO:0000269" key="3">
    <source>
    </source>
</evidence>
<evidence type="ECO:0000269" key="4">
    <source>
    </source>
</evidence>
<evidence type="ECO:0000303" key="5">
    <source>
    </source>
</evidence>
<evidence type="ECO:0000303" key="6">
    <source>
    </source>
</evidence>
<evidence type="ECO:0000305" key="7"/>
<evidence type="ECO:0000305" key="8">
    <source>
    </source>
</evidence>
<evidence type="ECO:0000312" key="9">
    <source>
        <dbReference type="EMBL" id="BAF14158.1"/>
    </source>
</evidence>
<evidence type="ECO:0000312" key="10">
    <source>
        <dbReference type="EMBL" id="CAE01609.2"/>
    </source>
</evidence>
<evidence type="ECO:0000312" key="11">
    <source>
        <dbReference type="EMBL" id="EAZ29768.1"/>
    </source>
</evidence>
<evidence type="ECO:0007744" key="12">
    <source>
        <dbReference type="PDB" id="5TMB"/>
    </source>
</evidence>
<evidence type="ECO:0007744" key="13">
    <source>
        <dbReference type="PDB" id="5TMD"/>
    </source>
</evidence>
<evidence type="ECO:0007744" key="14">
    <source>
        <dbReference type="PDB" id="5TME"/>
    </source>
</evidence>
<evidence type="ECO:0007829" key="15">
    <source>
        <dbReference type="PDB" id="6BK0"/>
    </source>
</evidence>
<organism>
    <name type="scientific">Oryza sativa subsp. japonica</name>
    <name type="common">Rice</name>
    <dbReference type="NCBI Taxonomy" id="39947"/>
    <lineage>
        <taxon>Eukaryota</taxon>
        <taxon>Viridiplantae</taxon>
        <taxon>Streptophyta</taxon>
        <taxon>Embryophyta</taxon>
        <taxon>Tracheophyta</taxon>
        <taxon>Spermatophyta</taxon>
        <taxon>Magnoliopsida</taxon>
        <taxon>Liliopsida</taxon>
        <taxon>Poales</taxon>
        <taxon>Poaceae</taxon>
        <taxon>BOP clade</taxon>
        <taxon>Oryzoideae</taxon>
        <taxon>Oryzeae</taxon>
        <taxon>Oryzinae</taxon>
        <taxon>Oryza</taxon>
        <taxon>Oryza sativa</taxon>
    </lineage>
</organism>
<proteinExistence type="evidence at protein level"/>
<dbReference type="EC" id="2.4.1.-" evidence="3"/>
<dbReference type="EMBL" id="AL606590">
    <property type="protein sequence ID" value="CAE01609.2"/>
    <property type="molecule type" value="Genomic_DNA"/>
</dbReference>
<dbReference type="EMBL" id="AP008210">
    <property type="protein sequence ID" value="BAF14158.1"/>
    <property type="molecule type" value="Genomic_DNA"/>
</dbReference>
<dbReference type="EMBL" id="AP014960">
    <property type="protein sequence ID" value="BAS88104.1"/>
    <property type="molecule type" value="Genomic_DNA"/>
</dbReference>
<dbReference type="EMBL" id="CM000141">
    <property type="protein sequence ID" value="EAZ29768.1"/>
    <property type="molecule type" value="Genomic_DNA"/>
</dbReference>
<dbReference type="EMBL" id="AK106302">
    <property type="protein sequence ID" value="BAG97673.1"/>
    <property type="molecule type" value="mRNA"/>
</dbReference>
<dbReference type="PDB" id="5TMB">
    <property type="method" value="X-ray"/>
    <property type="resolution" value="2.34 A"/>
    <property type="chains" value="A=1-466"/>
</dbReference>
<dbReference type="PDB" id="5TMD">
    <property type="method" value="X-ray"/>
    <property type="resolution" value="2.19 A"/>
    <property type="chains" value="A=1-466"/>
</dbReference>
<dbReference type="PDB" id="5TME">
    <property type="method" value="X-ray"/>
    <property type="resolution" value="1.78 A"/>
    <property type="chains" value="A=1-466"/>
</dbReference>
<dbReference type="PDB" id="6BK0">
    <property type="method" value="X-ray"/>
    <property type="resolution" value="1.47 A"/>
    <property type="chains" value="A=1-466"/>
</dbReference>
<dbReference type="PDB" id="6BK1">
    <property type="method" value="X-ray"/>
    <property type="resolution" value="1.58 A"/>
    <property type="chains" value="A=1-466"/>
</dbReference>
<dbReference type="PDB" id="6BK2">
    <property type="method" value="X-ray"/>
    <property type="resolution" value="1.68 A"/>
    <property type="chains" value="A=1-466"/>
</dbReference>
<dbReference type="PDB" id="6BK3">
    <property type="method" value="X-ray"/>
    <property type="resolution" value="2.17 A"/>
    <property type="chains" value="A=1-466"/>
</dbReference>
<dbReference type="PDBsum" id="5TMB"/>
<dbReference type="PDBsum" id="5TMD"/>
<dbReference type="PDBsum" id="5TME"/>
<dbReference type="PDBsum" id="6BK0"/>
<dbReference type="PDBsum" id="6BK1"/>
<dbReference type="PDBsum" id="6BK2"/>
<dbReference type="PDBsum" id="6BK3"/>
<dbReference type="SMR" id="Q7XT97"/>
<dbReference type="FunCoup" id="Q7XT97">
    <property type="interactions" value="1"/>
</dbReference>
<dbReference type="CAZy" id="GT1">
    <property type="family name" value="Glycosyltransferase Family 1"/>
</dbReference>
<dbReference type="PaxDb" id="39947-Q7XT97"/>
<dbReference type="EnsemblPlants" id="Os04t0206600-01">
    <property type="protein sequence ID" value="Os04t0206600-01"/>
    <property type="gene ID" value="Os04g0206600"/>
</dbReference>
<dbReference type="Gramene" id="Os04t0206600-01">
    <property type="protein sequence ID" value="Os04t0206600-01"/>
    <property type="gene ID" value="Os04g0206600"/>
</dbReference>
<dbReference type="KEGG" id="dosa:Os04g0206600"/>
<dbReference type="KEGG" id="osa:136351064"/>
<dbReference type="eggNOG" id="KOG1192">
    <property type="taxonomic scope" value="Eukaryota"/>
</dbReference>
<dbReference type="HOGENOM" id="CLU_001724_0_1_1"/>
<dbReference type="InParanoid" id="Q7XT97"/>
<dbReference type="OMA" id="FCEQSIE"/>
<dbReference type="OrthoDB" id="678493at2759"/>
<dbReference type="Proteomes" id="UP000000763">
    <property type="component" value="Chromosome 4"/>
</dbReference>
<dbReference type="Proteomes" id="UP000007752">
    <property type="component" value="Chromosome 4"/>
</dbReference>
<dbReference type="Proteomes" id="UP000059680">
    <property type="component" value="Chromosome 4"/>
</dbReference>
<dbReference type="GO" id="GO:0005737">
    <property type="term" value="C:cytoplasm"/>
    <property type="evidence" value="ECO:0000318"/>
    <property type="project" value="GO_Central"/>
</dbReference>
<dbReference type="GO" id="GO:0000166">
    <property type="term" value="F:nucleotide binding"/>
    <property type="evidence" value="ECO:0007669"/>
    <property type="project" value="UniProtKB-KW"/>
</dbReference>
<dbReference type="GO" id="GO:0080043">
    <property type="term" value="F:quercetin 3-O-glucosyltransferase activity"/>
    <property type="evidence" value="ECO:0000318"/>
    <property type="project" value="GO_Central"/>
</dbReference>
<dbReference type="GO" id="GO:0080044">
    <property type="term" value="F:quercetin 7-O-glucosyltransferase activity"/>
    <property type="evidence" value="ECO:0000318"/>
    <property type="project" value="GO_Central"/>
</dbReference>
<dbReference type="GO" id="GO:0008194">
    <property type="term" value="F:UDP-glycosyltransferase activity"/>
    <property type="evidence" value="ECO:0000314"/>
    <property type="project" value="UniProtKB"/>
</dbReference>
<dbReference type="GO" id="GO:0098754">
    <property type="term" value="P:detoxification"/>
    <property type="evidence" value="ECO:0000314"/>
    <property type="project" value="UniProtKB"/>
</dbReference>
<dbReference type="CDD" id="cd03784">
    <property type="entry name" value="GT1_Gtf-like"/>
    <property type="match status" value="1"/>
</dbReference>
<dbReference type="FunFam" id="3.40.50.2000:FF:000057">
    <property type="entry name" value="Glycosyltransferase"/>
    <property type="match status" value="1"/>
</dbReference>
<dbReference type="FunFam" id="3.40.50.2000:FF:000388">
    <property type="entry name" value="UDP-glycosyltransferase 79"/>
    <property type="match status" value="1"/>
</dbReference>
<dbReference type="Gene3D" id="3.40.50.2000">
    <property type="entry name" value="Glycogen Phosphorylase B"/>
    <property type="match status" value="2"/>
</dbReference>
<dbReference type="InterPro" id="IPR002213">
    <property type="entry name" value="UDP_glucos_trans"/>
</dbReference>
<dbReference type="InterPro" id="IPR035595">
    <property type="entry name" value="UDP_glycos_trans_CS"/>
</dbReference>
<dbReference type="PANTHER" id="PTHR11926">
    <property type="entry name" value="GLUCOSYL/GLUCURONOSYL TRANSFERASES"/>
    <property type="match status" value="1"/>
</dbReference>
<dbReference type="PANTHER" id="PTHR11926:SF732">
    <property type="entry name" value="UDP-GLYCOSYLTRANSFERASE 79"/>
    <property type="match status" value="1"/>
</dbReference>
<dbReference type="Pfam" id="PF00201">
    <property type="entry name" value="UDPGT"/>
    <property type="match status" value="1"/>
</dbReference>
<dbReference type="SUPFAM" id="SSF53756">
    <property type="entry name" value="UDP-Glycosyltransferase/glycogen phosphorylase"/>
    <property type="match status" value="1"/>
</dbReference>
<dbReference type="PROSITE" id="PS00375">
    <property type="entry name" value="UDPGT"/>
    <property type="match status" value="1"/>
</dbReference>
<sequence>MGSMSTPAASANGGQVLLLPFPAAQGHTNPMLQFGRRLAYHGLRPTLVTTRYVLSTTPPPGDPFRVAAISDGFDDASGMAALPDPGEYLRTLEAHGARTLAELLLSEARAGRPARVLVYDPHLPWARRVARAAGVATAAFLSQPCAVDLIYGEVCARRLALPVTPTDARGLYARGVLGVELGPDDVPPFVAAPELTPAFCEQSIEQFAGLEDDDDVLVNSFSDLEPKEAAYMESTWRAKTIGPSLPSFYLDDGRLRSNTAYGFNLFRSTVPCMEWLDKQPPRSVVLVSYGTVSTFDVAKLEELGNGLCNSGKPFLWVVRSNEEHKLSVQLRKKCEKRGLIVPFCPQLEVLAHKATGCFLSHCGWNSTLEAIVNGVPLVAMPHWADQPTISKYVESLWGMGVRVQLDKSGILQREEVERCIREVMDGDRKEDYRRNATRLMKKAKESMQEGGSSDKNIAEFAAKYSN</sequence>
<feature type="chain" id="PRO_0000441955" description="UDP-glycosyltransferase 79">
    <location>
        <begin position="1"/>
        <end position="466"/>
    </location>
</feature>
<feature type="active site" description="Proton acceptor" evidence="1">
    <location>
        <position position="27"/>
    </location>
</feature>
<feature type="active site" description="Charge relay" evidence="1">
    <location>
        <position position="120"/>
    </location>
</feature>
<feature type="binding site" evidence="8 13">
    <location>
        <position position="27"/>
    </location>
    <ligand>
        <name>UDP-alpha-D-glucose</name>
        <dbReference type="ChEBI" id="CHEBI:58885"/>
    </ligand>
</feature>
<feature type="binding site" evidence="8 13">
    <location>
        <position position="142"/>
    </location>
    <ligand>
        <name>UDP-alpha-D-glucose</name>
        <dbReference type="ChEBI" id="CHEBI:58885"/>
    </ligand>
</feature>
<feature type="binding site" evidence="4 12 14">
    <location>
        <position position="291"/>
    </location>
    <ligand>
        <name>UDP</name>
        <dbReference type="ChEBI" id="CHEBI:58223"/>
    </ligand>
</feature>
<feature type="binding site" evidence="8 13">
    <location>
        <position position="291"/>
    </location>
    <ligand>
        <name>UDP-alpha-D-glucose</name>
        <dbReference type="ChEBI" id="CHEBI:58885"/>
    </ligand>
</feature>
<feature type="binding site" evidence="4 12">
    <location>
        <position position="343"/>
    </location>
    <ligand>
        <name>UDP</name>
        <dbReference type="ChEBI" id="CHEBI:58223"/>
    </ligand>
</feature>
<feature type="binding site" evidence="8 13">
    <location>
        <position position="343"/>
    </location>
    <ligand>
        <name>UDP-alpha-D-glucose</name>
        <dbReference type="ChEBI" id="CHEBI:58885"/>
    </ligand>
</feature>
<feature type="binding site" evidence="4 12 14">
    <location>
        <position position="344"/>
    </location>
    <ligand>
        <name>UDP</name>
        <dbReference type="ChEBI" id="CHEBI:58223"/>
    </ligand>
</feature>
<feature type="binding site" evidence="8 13">
    <location>
        <position position="344"/>
    </location>
    <ligand>
        <name>UDP-alpha-D-glucose</name>
        <dbReference type="ChEBI" id="CHEBI:58885"/>
    </ligand>
</feature>
<feature type="binding site" evidence="4 12 14">
    <location>
        <position position="361"/>
    </location>
    <ligand>
        <name>UDP</name>
        <dbReference type="ChEBI" id="CHEBI:58223"/>
    </ligand>
</feature>
<feature type="binding site" evidence="8 13">
    <location>
        <position position="361"/>
    </location>
    <ligand>
        <name>UDP-alpha-D-glucose</name>
        <dbReference type="ChEBI" id="CHEBI:58885"/>
    </ligand>
</feature>
<feature type="binding site" evidence="8 13">
    <location>
        <position position="364"/>
    </location>
    <ligand>
        <name>UDP-alpha-D-glucose</name>
        <dbReference type="ChEBI" id="CHEBI:58885"/>
    </ligand>
</feature>
<feature type="binding site" evidence="4 12 14">
    <location>
        <position position="365"/>
    </location>
    <ligand>
        <name>UDP</name>
        <dbReference type="ChEBI" id="CHEBI:58223"/>
    </ligand>
</feature>
<feature type="binding site" evidence="8 13">
    <location>
        <position position="365"/>
    </location>
    <ligand>
        <name>UDP-alpha-D-glucose</name>
        <dbReference type="ChEBI" id="CHEBI:58885"/>
    </ligand>
</feature>
<feature type="binding site" evidence="4 12 14">
    <location>
        <position position="366"/>
    </location>
    <ligand>
        <name>UDP</name>
        <dbReference type="ChEBI" id="CHEBI:58223"/>
    </ligand>
</feature>
<feature type="binding site" evidence="8 13">
    <location>
        <position position="366"/>
    </location>
    <ligand>
        <name>UDP-alpha-D-glucose</name>
        <dbReference type="ChEBI" id="CHEBI:58885"/>
    </ligand>
</feature>
<feature type="binding site" evidence="4 12 14">
    <location>
        <position position="369"/>
    </location>
    <ligand>
        <name>UDP</name>
        <dbReference type="ChEBI" id="CHEBI:58223"/>
    </ligand>
</feature>
<feature type="binding site" evidence="8 13">
    <location>
        <position position="369"/>
    </location>
    <ligand>
        <name>UDP-alpha-D-glucose</name>
        <dbReference type="ChEBI" id="CHEBI:58885"/>
    </ligand>
</feature>
<feature type="binding site" evidence="8 13">
    <location>
        <position position="385"/>
    </location>
    <ligand>
        <name>UDP-alpha-D-glucose</name>
        <dbReference type="ChEBI" id="CHEBI:58885"/>
    </ligand>
</feature>
<feature type="binding site" evidence="8 13">
    <location>
        <position position="386"/>
    </location>
    <ligand>
        <name>UDP-alpha-D-glucose</name>
        <dbReference type="ChEBI" id="CHEBI:58885"/>
    </ligand>
</feature>
<feature type="mutagenesis site" description="Loss of activity; when associated with A-120." evidence="4">
    <original>H</original>
    <variation>N</variation>
    <location>
        <position position="27"/>
    </location>
</feature>
<feature type="mutagenesis site" description="Loss of activity; when associated with N-27." evidence="4">
    <original>D</original>
    <variation>A</variation>
    <location>
        <position position="120"/>
    </location>
</feature>
<feature type="mutagenesis site" description="Loss of activity." evidence="4">
    <original>T</original>
    <variation>A</variation>
    <variation>V</variation>
    <location>
        <position position="291"/>
    </location>
</feature>
<feature type="mutagenesis site" description="No effect on activity." evidence="4">
    <original>H</original>
    <variation>A</variation>
    <location>
        <position position="361"/>
    </location>
</feature>
<feature type="sequence conflict" description="In Ref. 5; EAZ29768." evidence="7" ref="5">
    <original>A</original>
    <variation>G</variation>
    <location>
        <position position="81"/>
    </location>
</feature>
<feature type="sequence conflict" description="In Ref. 5; EAZ29768." evidence="7" ref="5">
    <original>P</original>
    <variation>S</variation>
    <location>
        <position position="121"/>
    </location>
</feature>
<feature type="strand" evidence="15">
    <location>
        <begin position="16"/>
        <end position="19"/>
    </location>
</feature>
<feature type="helix" evidence="15">
    <location>
        <begin position="29"/>
        <end position="40"/>
    </location>
</feature>
<feature type="strand" evidence="15">
    <location>
        <begin position="45"/>
        <end position="50"/>
    </location>
</feature>
<feature type="helix" evidence="15">
    <location>
        <begin position="51"/>
        <end position="56"/>
    </location>
</feature>
<feature type="strand" evidence="15">
    <location>
        <begin position="65"/>
        <end position="69"/>
    </location>
</feature>
<feature type="strand" evidence="15">
    <location>
        <begin position="74"/>
        <end position="76"/>
    </location>
</feature>
<feature type="helix" evidence="15">
    <location>
        <begin position="78"/>
        <end position="81"/>
    </location>
</feature>
<feature type="helix" evidence="15">
    <location>
        <begin position="85"/>
        <end position="109"/>
    </location>
</feature>
<feature type="strand" evidence="15">
    <location>
        <begin position="115"/>
        <end position="119"/>
    </location>
</feature>
<feature type="helix" evidence="15">
    <location>
        <begin position="124"/>
        <end position="132"/>
    </location>
</feature>
<feature type="strand" evidence="15">
    <location>
        <begin position="136"/>
        <end position="141"/>
    </location>
</feature>
<feature type="helix" evidence="15">
    <location>
        <begin position="145"/>
        <end position="155"/>
    </location>
</feature>
<feature type="helix" evidence="15">
    <location>
        <begin position="165"/>
        <end position="173"/>
    </location>
</feature>
<feature type="strand" evidence="15">
    <location>
        <begin position="176"/>
        <end position="179"/>
    </location>
</feature>
<feature type="turn" evidence="15">
    <location>
        <begin position="183"/>
        <end position="185"/>
    </location>
</feature>
<feature type="helix" evidence="15">
    <location>
        <begin position="188"/>
        <end position="191"/>
    </location>
</feature>
<feature type="helix" evidence="15">
    <location>
        <begin position="193"/>
        <end position="195"/>
    </location>
</feature>
<feature type="helix" evidence="15">
    <location>
        <begin position="197"/>
        <end position="205"/>
    </location>
</feature>
<feature type="turn" evidence="15">
    <location>
        <begin position="206"/>
        <end position="209"/>
    </location>
</feature>
<feature type="helix" evidence="15">
    <location>
        <begin position="210"/>
        <end position="212"/>
    </location>
</feature>
<feature type="strand" evidence="15">
    <location>
        <begin position="213"/>
        <end position="220"/>
    </location>
</feature>
<feature type="turn" evidence="15">
    <location>
        <begin position="222"/>
        <end position="224"/>
    </location>
</feature>
<feature type="helix" evidence="15">
    <location>
        <begin position="226"/>
        <end position="236"/>
    </location>
</feature>
<feature type="strand" evidence="15">
    <location>
        <begin position="238"/>
        <end position="240"/>
    </location>
</feature>
<feature type="helix" evidence="15">
    <location>
        <begin position="247"/>
        <end position="250"/>
    </location>
</feature>
<feature type="helix" evidence="15">
    <location>
        <begin position="271"/>
        <end position="277"/>
    </location>
</feature>
<feature type="strand" evidence="15">
    <location>
        <begin position="284"/>
        <end position="288"/>
    </location>
</feature>
<feature type="turn" evidence="15">
    <location>
        <begin position="290"/>
        <end position="292"/>
    </location>
</feature>
<feature type="helix" evidence="15">
    <location>
        <begin position="297"/>
        <end position="309"/>
    </location>
</feature>
<feature type="strand" evidence="15">
    <location>
        <begin position="314"/>
        <end position="317"/>
    </location>
</feature>
<feature type="turn" evidence="15">
    <location>
        <begin position="320"/>
        <end position="322"/>
    </location>
</feature>
<feature type="helix" evidence="15">
    <location>
        <begin position="323"/>
        <end position="325"/>
    </location>
</feature>
<feature type="helix" evidence="15">
    <location>
        <begin position="328"/>
        <end position="334"/>
    </location>
</feature>
<feature type="turn" evidence="15">
    <location>
        <begin position="335"/>
        <end position="337"/>
    </location>
</feature>
<feature type="strand" evidence="15">
    <location>
        <begin position="338"/>
        <end position="342"/>
    </location>
</feature>
<feature type="helix" evidence="15">
    <location>
        <begin position="346"/>
        <end position="351"/>
    </location>
</feature>
<feature type="strand" evidence="15">
    <location>
        <begin position="355"/>
        <end position="360"/>
    </location>
</feature>
<feature type="helix" evidence="15">
    <location>
        <begin position="364"/>
        <end position="373"/>
    </location>
</feature>
<feature type="strand" evidence="15">
    <location>
        <begin position="377"/>
        <end position="379"/>
    </location>
</feature>
<feature type="helix" evidence="15">
    <location>
        <begin position="386"/>
        <end position="395"/>
    </location>
</feature>
<feature type="strand" evidence="15">
    <location>
        <begin position="399"/>
        <end position="402"/>
    </location>
</feature>
<feature type="helix" evidence="15">
    <location>
        <begin position="413"/>
        <end position="425"/>
    </location>
</feature>
<feature type="helix" evidence="15">
    <location>
        <begin position="429"/>
        <end position="447"/>
    </location>
</feature>
<feature type="helix" evidence="15">
    <location>
        <begin position="452"/>
        <end position="463"/>
    </location>
</feature>
<name>UGT79_ORYSJ</name>
<reference key="1">
    <citation type="journal article" date="2002" name="Nature">
        <title>Sequence and analysis of rice chromosome 4.</title>
        <authorList>
            <person name="Feng Q."/>
            <person name="Zhang Y."/>
            <person name="Hao P."/>
            <person name="Wang S."/>
            <person name="Fu G."/>
            <person name="Huang Y."/>
            <person name="Li Y."/>
            <person name="Zhu J."/>
            <person name="Liu Y."/>
            <person name="Hu X."/>
            <person name="Jia P."/>
            <person name="Zhang Y."/>
            <person name="Zhao Q."/>
            <person name="Ying K."/>
            <person name="Yu S."/>
            <person name="Tang Y."/>
            <person name="Weng Q."/>
            <person name="Zhang L."/>
            <person name="Lu Y."/>
            <person name="Mu J."/>
            <person name="Lu Y."/>
            <person name="Zhang L.S."/>
            <person name="Yu Z."/>
            <person name="Fan D."/>
            <person name="Liu X."/>
            <person name="Lu T."/>
            <person name="Li C."/>
            <person name="Wu Y."/>
            <person name="Sun T."/>
            <person name="Lei H."/>
            <person name="Li T."/>
            <person name="Hu H."/>
            <person name="Guan J."/>
            <person name="Wu M."/>
            <person name="Zhang R."/>
            <person name="Zhou B."/>
            <person name="Chen Z."/>
            <person name="Chen L."/>
            <person name="Jin Z."/>
            <person name="Wang R."/>
            <person name="Yin H."/>
            <person name="Cai Z."/>
            <person name="Ren S."/>
            <person name="Lv G."/>
            <person name="Gu W."/>
            <person name="Zhu G."/>
            <person name="Tu Y."/>
            <person name="Jia J."/>
            <person name="Zhang Y."/>
            <person name="Chen J."/>
            <person name="Kang H."/>
            <person name="Chen X."/>
            <person name="Shao C."/>
            <person name="Sun Y."/>
            <person name="Hu Q."/>
            <person name="Zhang X."/>
            <person name="Zhang W."/>
            <person name="Wang L."/>
            <person name="Ding C."/>
            <person name="Sheng H."/>
            <person name="Gu J."/>
            <person name="Chen S."/>
            <person name="Ni L."/>
            <person name="Zhu F."/>
            <person name="Chen W."/>
            <person name="Lan L."/>
            <person name="Lai Y."/>
            <person name="Cheng Z."/>
            <person name="Gu M."/>
            <person name="Jiang J."/>
            <person name="Li J."/>
            <person name="Hong G."/>
            <person name="Xue Y."/>
            <person name="Han B."/>
        </authorList>
    </citation>
    <scope>NUCLEOTIDE SEQUENCE [LARGE SCALE GENOMIC DNA]</scope>
    <source>
        <strain>cv. Nipponbare</strain>
    </source>
</reference>
<reference key="2">
    <citation type="journal article" date="2005" name="Nature">
        <title>The map-based sequence of the rice genome.</title>
        <authorList>
            <consortium name="International rice genome sequencing project (IRGSP)"/>
        </authorList>
    </citation>
    <scope>NUCLEOTIDE SEQUENCE [LARGE SCALE GENOMIC DNA]</scope>
    <source>
        <strain>cv. Nipponbare</strain>
    </source>
</reference>
<reference key="3">
    <citation type="journal article" date="2008" name="Nucleic Acids Res.">
        <title>The rice annotation project database (RAP-DB): 2008 update.</title>
        <authorList>
            <consortium name="The rice annotation project (RAP)"/>
        </authorList>
    </citation>
    <scope>GENOME REANNOTATION</scope>
    <source>
        <strain>cv. Nipponbare</strain>
    </source>
</reference>
<reference key="4">
    <citation type="journal article" date="2013" name="Rice">
        <title>Improvement of the Oryza sativa Nipponbare reference genome using next generation sequence and optical map data.</title>
        <authorList>
            <person name="Kawahara Y."/>
            <person name="de la Bastide M."/>
            <person name="Hamilton J.P."/>
            <person name="Kanamori H."/>
            <person name="McCombie W.R."/>
            <person name="Ouyang S."/>
            <person name="Schwartz D.C."/>
            <person name="Tanaka T."/>
            <person name="Wu J."/>
            <person name="Zhou S."/>
            <person name="Childs K.L."/>
            <person name="Davidson R.M."/>
            <person name="Lin H."/>
            <person name="Quesada-Ocampo L."/>
            <person name="Vaillancourt B."/>
            <person name="Sakai H."/>
            <person name="Lee S.S."/>
            <person name="Kim J."/>
            <person name="Numa H."/>
            <person name="Itoh T."/>
            <person name="Buell C.R."/>
            <person name="Matsumoto T."/>
        </authorList>
    </citation>
    <scope>GENOME REANNOTATION</scope>
    <source>
        <strain>cv. Nipponbare</strain>
    </source>
</reference>
<reference key="5">
    <citation type="journal article" date="2005" name="PLoS Biol.">
        <title>The genomes of Oryza sativa: a history of duplications.</title>
        <authorList>
            <person name="Yu J."/>
            <person name="Wang J."/>
            <person name="Lin W."/>
            <person name="Li S."/>
            <person name="Li H."/>
            <person name="Zhou J."/>
            <person name="Ni P."/>
            <person name="Dong W."/>
            <person name="Hu S."/>
            <person name="Zeng C."/>
            <person name="Zhang J."/>
            <person name="Zhang Y."/>
            <person name="Li R."/>
            <person name="Xu Z."/>
            <person name="Li S."/>
            <person name="Li X."/>
            <person name="Zheng H."/>
            <person name="Cong L."/>
            <person name="Lin L."/>
            <person name="Yin J."/>
            <person name="Geng J."/>
            <person name="Li G."/>
            <person name="Shi J."/>
            <person name="Liu J."/>
            <person name="Lv H."/>
            <person name="Li J."/>
            <person name="Wang J."/>
            <person name="Deng Y."/>
            <person name="Ran L."/>
            <person name="Shi X."/>
            <person name="Wang X."/>
            <person name="Wu Q."/>
            <person name="Li C."/>
            <person name="Ren X."/>
            <person name="Wang J."/>
            <person name="Wang X."/>
            <person name="Li D."/>
            <person name="Liu D."/>
            <person name="Zhang X."/>
            <person name="Ji Z."/>
            <person name="Zhao W."/>
            <person name="Sun Y."/>
            <person name="Zhang Z."/>
            <person name="Bao J."/>
            <person name="Han Y."/>
            <person name="Dong L."/>
            <person name="Ji J."/>
            <person name="Chen P."/>
            <person name="Wu S."/>
            <person name="Liu J."/>
            <person name="Xiao Y."/>
            <person name="Bu D."/>
            <person name="Tan J."/>
            <person name="Yang L."/>
            <person name="Ye C."/>
            <person name="Zhang J."/>
            <person name="Xu J."/>
            <person name="Zhou Y."/>
            <person name="Yu Y."/>
            <person name="Zhang B."/>
            <person name="Zhuang S."/>
            <person name="Wei H."/>
            <person name="Liu B."/>
            <person name="Lei M."/>
            <person name="Yu H."/>
            <person name="Li Y."/>
            <person name="Xu H."/>
            <person name="Wei S."/>
            <person name="He X."/>
            <person name="Fang L."/>
            <person name="Zhang Z."/>
            <person name="Zhang Y."/>
            <person name="Huang X."/>
            <person name="Su Z."/>
            <person name="Tong W."/>
            <person name="Li J."/>
            <person name="Tong Z."/>
            <person name="Li S."/>
            <person name="Ye J."/>
            <person name="Wang L."/>
            <person name="Fang L."/>
            <person name="Lei T."/>
            <person name="Chen C.-S."/>
            <person name="Chen H.-C."/>
            <person name="Xu Z."/>
            <person name="Li H."/>
            <person name="Huang H."/>
            <person name="Zhang F."/>
            <person name="Xu H."/>
            <person name="Li N."/>
            <person name="Zhao C."/>
            <person name="Li S."/>
            <person name="Dong L."/>
            <person name="Huang Y."/>
            <person name="Li L."/>
            <person name="Xi Y."/>
            <person name="Qi Q."/>
            <person name="Li W."/>
            <person name="Zhang B."/>
            <person name="Hu W."/>
            <person name="Zhang Y."/>
            <person name="Tian X."/>
            <person name="Jiao Y."/>
            <person name="Liang X."/>
            <person name="Jin J."/>
            <person name="Gao L."/>
            <person name="Zheng W."/>
            <person name="Hao B."/>
            <person name="Liu S.-M."/>
            <person name="Wang W."/>
            <person name="Yuan L."/>
            <person name="Cao M."/>
            <person name="McDermott J."/>
            <person name="Samudrala R."/>
            <person name="Wang J."/>
            <person name="Wong G.K.-S."/>
            <person name="Yang H."/>
        </authorList>
    </citation>
    <scope>NUCLEOTIDE SEQUENCE [LARGE SCALE GENOMIC DNA]</scope>
    <source>
        <strain>cv. Nipponbare</strain>
    </source>
</reference>
<reference key="6">
    <citation type="journal article" date="2003" name="Science">
        <title>Collection, mapping, and annotation of over 28,000 cDNA clones from japonica rice.</title>
        <authorList>
            <consortium name="The rice full-length cDNA consortium"/>
        </authorList>
    </citation>
    <scope>NUCLEOTIDE SEQUENCE [LARGE SCALE MRNA]</scope>
    <source>
        <strain>cv. Nipponbare</strain>
    </source>
</reference>
<reference key="7">
    <citation type="journal article" date="2014" name="Gene">
        <title>Identification of rice genes associated with cosmic-ray response via co-expression gene network analysis.</title>
        <authorList>
            <person name="Hwang S.G."/>
            <person name="Kim D.S."/>
            <person name="Hwang J.E."/>
            <person name="Han A.R."/>
            <person name="Jang C.S."/>
        </authorList>
    </citation>
    <scope>INDUCTION BY GAMMA RAY</scope>
</reference>
<reference key="8">
    <citation type="journal article" date="2015" name="Toxins">
        <title>Biochemical characterization of a recombinant UDP-glucosyltransferase from rice and enzymatic production of deoxynivalenol-3-O-beta-D-glucoside.</title>
        <authorList>
            <person name="Michlmayr H."/>
            <person name="Malachova A."/>
            <person name="Varga E."/>
            <person name="Kleinova J."/>
            <person name="Lemmens M."/>
            <person name="Newmister S."/>
            <person name="Rayment I."/>
            <person name="Berthiller F."/>
            <person name="Adam G."/>
        </authorList>
    </citation>
    <scope>FUNCTION</scope>
    <scope>BIOPHYSICOCHEMICAL PROPERTIES</scope>
</reference>
<reference key="9">
    <citation type="journal article" date="2016" name="Biochemistry">
        <title>Crystal Structure of Os79 (Os04g0206600) from Oryza sativa: A UDP-glucosyltransferase Involved in the Detoxification of Deoxynivalenol.</title>
        <authorList>
            <person name="Wetterhorn K.M."/>
            <person name="Newmister S.A."/>
            <person name="Caniza R.K."/>
            <person name="Busman M."/>
            <person name="McCormick S.P."/>
            <person name="Berthiller F."/>
            <person name="Adam G."/>
            <person name="Rayment I."/>
        </authorList>
    </citation>
    <scope>X-RAY CRYSTALLOGRAPHY (1.78 ANGSTROMS) IN COMPLEX WITH UDP-GLUCOSE ANALOG AND UDP</scope>
    <scope>FUNCTION</scope>
    <scope>BIOPHYSICOCHEMICAL PROPERTIES</scope>
    <scope>MUTAGENESIS OF HIS-27; ASP-120; THR-291 AND HIS-361</scope>
</reference>